<sequence>MNIFNNNLHETDKEINEIIKHEKLRQSSVIELIASENFVSPAVLEAQGALLTNKYAEGYPSKRFYNGCEEVDKAENLAIERVKKLFNCKYANVQPHSGSQANQAVYLALLQPGDTVLGMSLDSGGHLTHGAAPNMSGKWFNAVSYSVNKETYLIDYDEIERLADLHKPKLLIAGFSAYPRNIDFAKFREIVDKVGAYFMADIAHIAGLVATGEHQSPIPYAHAVTSTTHKTLRGPRGGLILSNDEEIGHKINSALFPGLQGGPLMHIIAAKAVAFLENLQPEYKSYIQQVISNAKALASSLQERGYDILTGGTDNHIVLVDLRKDGITGKLAANSLDRAGITCNKNAIPFDETSPFITSGIRLGTPACTTRGFKEKDFVLVGHMVADILDGLKNNEDNSALEQQVLNEVTKLIELFPFYG</sequence>
<feature type="chain" id="PRO_1000006309" description="Serine hydroxymethyltransferase">
    <location>
        <begin position="1"/>
        <end position="420"/>
    </location>
</feature>
<feature type="binding site" evidence="1">
    <location>
        <position position="121"/>
    </location>
    <ligand>
        <name>(6S)-5,6,7,8-tetrahydrofolate</name>
        <dbReference type="ChEBI" id="CHEBI:57453"/>
    </ligand>
</feature>
<feature type="binding site" evidence="1">
    <location>
        <begin position="125"/>
        <end position="127"/>
    </location>
    <ligand>
        <name>(6S)-5,6,7,8-tetrahydrofolate</name>
        <dbReference type="ChEBI" id="CHEBI:57453"/>
    </ligand>
</feature>
<feature type="binding site" evidence="1">
    <location>
        <position position="246"/>
    </location>
    <ligand>
        <name>(6S)-5,6,7,8-tetrahydrofolate</name>
        <dbReference type="ChEBI" id="CHEBI:57453"/>
    </ligand>
</feature>
<feature type="binding site" evidence="1">
    <location>
        <begin position="354"/>
        <end position="356"/>
    </location>
    <ligand>
        <name>(6S)-5,6,7,8-tetrahydrofolate</name>
        <dbReference type="ChEBI" id="CHEBI:57453"/>
    </ligand>
</feature>
<feature type="site" description="Plays an important role in substrate specificity" evidence="1">
    <location>
        <position position="229"/>
    </location>
</feature>
<feature type="modified residue" description="N6-(pyridoxal phosphate)lysine" evidence="1">
    <location>
        <position position="230"/>
    </location>
</feature>
<feature type="helix" evidence="2">
    <location>
        <begin position="3"/>
        <end position="5"/>
    </location>
</feature>
<feature type="helix" evidence="2">
    <location>
        <begin position="8"/>
        <end position="11"/>
    </location>
</feature>
<feature type="helix" evidence="2">
    <location>
        <begin position="13"/>
        <end position="28"/>
    </location>
</feature>
<feature type="strand" evidence="2">
    <location>
        <begin position="29"/>
        <end position="31"/>
    </location>
</feature>
<feature type="helix" evidence="2">
    <location>
        <begin position="41"/>
        <end position="47"/>
    </location>
</feature>
<feature type="helix" evidence="2">
    <location>
        <begin position="50"/>
        <end position="53"/>
    </location>
</feature>
<feature type="strand" evidence="2">
    <location>
        <begin position="62"/>
        <end position="66"/>
    </location>
</feature>
<feature type="helix" evidence="2">
    <location>
        <begin position="69"/>
        <end position="86"/>
    </location>
</feature>
<feature type="strand" evidence="2">
    <location>
        <begin position="89"/>
        <end position="92"/>
    </location>
</feature>
<feature type="helix" evidence="2">
    <location>
        <begin position="98"/>
        <end position="109"/>
    </location>
</feature>
<feature type="strand" evidence="2">
    <location>
        <begin position="115"/>
        <end position="119"/>
    </location>
</feature>
<feature type="helix" evidence="2">
    <location>
        <begin position="121"/>
        <end position="123"/>
    </location>
</feature>
<feature type="helix" evidence="2">
    <location>
        <begin position="127"/>
        <end position="129"/>
    </location>
</feature>
<feature type="helix" evidence="2">
    <location>
        <begin position="135"/>
        <end position="138"/>
    </location>
</feature>
<feature type="strand" evidence="2">
    <location>
        <begin position="139"/>
        <end position="145"/>
    </location>
</feature>
<feature type="turn" evidence="2">
    <location>
        <begin position="149"/>
        <end position="151"/>
    </location>
</feature>
<feature type="helix" evidence="2">
    <location>
        <begin position="156"/>
        <end position="166"/>
    </location>
</feature>
<feature type="strand" evidence="2">
    <location>
        <begin position="169"/>
        <end position="174"/>
    </location>
</feature>
<feature type="helix" evidence="2">
    <location>
        <begin position="184"/>
        <end position="194"/>
    </location>
</feature>
<feature type="strand" evidence="2">
    <location>
        <begin position="197"/>
        <end position="201"/>
    </location>
</feature>
<feature type="turn" evidence="2">
    <location>
        <begin position="203"/>
        <end position="205"/>
    </location>
</feature>
<feature type="helix" evidence="2">
    <location>
        <begin position="206"/>
        <end position="210"/>
    </location>
</feature>
<feature type="turn" evidence="2">
    <location>
        <begin position="218"/>
        <end position="220"/>
    </location>
</feature>
<feature type="strand" evidence="2">
    <location>
        <begin position="222"/>
        <end position="227"/>
    </location>
</feature>
<feature type="strand" evidence="2">
    <location>
        <begin position="238"/>
        <end position="243"/>
    </location>
</feature>
<feature type="helix" evidence="2">
    <location>
        <begin position="245"/>
        <end position="255"/>
    </location>
</feature>
<feature type="turn" evidence="2">
    <location>
        <begin position="256"/>
        <end position="259"/>
    </location>
</feature>
<feature type="helix" evidence="2">
    <location>
        <begin position="265"/>
        <end position="278"/>
    </location>
</feature>
<feature type="helix" evidence="2">
    <location>
        <begin position="281"/>
        <end position="303"/>
    </location>
</feature>
<feature type="helix" evidence="2">
    <location>
        <begin position="309"/>
        <end position="311"/>
    </location>
</feature>
<feature type="strand" evidence="2">
    <location>
        <begin position="314"/>
        <end position="321"/>
    </location>
</feature>
<feature type="helix" evidence="2">
    <location>
        <begin position="323"/>
        <end position="325"/>
    </location>
</feature>
<feature type="helix" evidence="2">
    <location>
        <begin position="329"/>
        <end position="338"/>
    </location>
</feature>
<feature type="turn" evidence="2">
    <location>
        <begin position="355"/>
        <end position="357"/>
    </location>
</feature>
<feature type="strand" evidence="2">
    <location>
        <begin position="359"/>
        <end position="364"/>
    </location>
</feature>
<feature type="helix" evidence="2">
    <location>
        <begin position="366"/>
        <end position="370"/>
    </location>
</feature>
<feature type="helix" evidence="2">
    <location>
        <begin position="375"/>
        <end position="394"/>
    </location>
</feature>
<feature type="helix" evidence="2">
    <location>
        <begin position="399"/>
        <end position="413"/>
    </location>
</feature>
<reference key="1">
    <citation type="submission" date="2007-09" db="EMBL/GenBank/DDBJ databases">
        <title>Complete genome sequence of Rickettsia rickettsii.</title>
        <authorList>
            <person name="Madan A."/>
            <person name="Fahey J."/>
            <person name="Helton E."/>
            <person name="Ketteman M."/>
            <person name="Madan A."/>
            <person name="Rodrigues S."/>
            <person name="Sanchez A."/>
            <person name="Dasch G."/>
            <person name="Eremeeva M."/>
        </authorList>
    </citation>
    <scope>NUCLEOTIDE SEQUENCE [LARGE SCALE GENOMIC DNA]</scope>
    <source>
        <strain>Sheila Smith</strain>
    </source>
</reference>
<comment type="function">
    <text evidence="1">Catalyzes the reversible interconversion of serine and glycine with tetrahydrofolate (THF) serving as the one-carbon carrier. This reaction serves as the major source of one-carbon groups required for the biosynthesis of purines, thymidylate, methionine, and other important biomolecules. Also exhibits THF-independent aldolase activity toward beta-hydroxyamino acids, producing glycine and aldehydes, via a retro-aldol mechanism.</text>
</comment>
<comment type="catalytic activity">
    <reaction evidence="1">
        <text>(6R)-5,10-methylene-5,6,7,8-tetrahydrofolate + glycine + H2O = (6S)-5,6,7,8-tetrahydrofolate + L-serine</text>
        <dbReference type="Rhea" id="RHEA:15481"/>
        <dbReference type="ChEBI" id="CHEBI:15377"/>
        <dbReference type="ChEBI" id="CHEBI:15636"/>
        <dbReference type="ChEBI" id="CHEBI:33384"/>
        <dbReference type="ChEBI" id="CHEBI:57305"/>
        <dbReference type="ChEBI" id="CHEBI:57453"/>
        <dbReference type="EC" id="2.1.2.1"/>
    </reaction>
</comment>
<comment type="cofactor">
    <cofactor evidence="1">
        <name>pyridoxal 5'-phosphate</name>
        <dbReference type="ChEBI" id="CHEBI:597326"/>
    </cofactor>
</comment>
<comment type="pathway">
    <text evidence="1">One-carbon metabolism; tetrahydrofolate interconversion.</text>
</comment>
<comment type="pathway">
    <text evidence="1">Amino-acid biosynthesis; glycine biosynthesis; glycine from L-serine: step 1/1.</text>
</comment>
<comment type="subunit">
    <text evidence="1">Homodimer.</text>
</comment>
<comment type="subcellular location">
    <subcellularLocation>
        <location evidence="1">Cytoplasm</location>
    </subcellularLocation>
</comment>
<comment type="similarity">
    <text evidence="1">Belongs to the SHMT family.</text>
</comment>
<dbReference type="EC" id="2.1.2.1" evidence="1"/>
<dbReference type="EMBL" id="CP000848">
    <property type="protein sequence ID" value="ABV76714.1"/>
    <property type="molecule type" value="Genomic_DNA"/>
</dbReference>
<dbReference type="RefSeq" id="WP_012151264.1">
    <property type="nucleotide sequence ID" value="NZ_CP121767.1"/>
</dbReference>
<dbReference type="PDB" id="4J5U">
    <property type="method" value="X-ray"/>
    <property type="resolution" value="1.70 A"/>
    <property type="chains" value="A/B=1-420"/>
</dbReference>
<dbReference type="PDBsum" id="4J5U"/>
<dbReference type="SMR" id="A8GTI9"/>
<dbReference type="GeneID" id="79937772"/>
<dbReference type="KEGG" id="rri:A1G_06305"/>
<dbReference type="HOGENOM" id="CLU_022477_2_1_5"/>
<dbReference type="BRENDA" id="2.1.2.1">
    <property type="organism ID" value="14408"/>
</dbReference>
<dbReference type="UniPathway" id="UPA00193"/>
<dbReference type="UniPathway" id="UPA00288">
    <property type="reaction ID" value="UER01023"/>
</dbReference>
<dbReference type="EvolutionaryTrace" id="A8GTI9"/>
<dbReference type="Proteomes" id="UP000006832">
    <property type="component" value="Chromosome"/>
</dbReference>
<dbReference type="GO" id="GO:0005829">
    <property type="term" value="C:cytosol"/>
    <property type="evidence" value="ECO:0007669"/>
    <property type="project" value="TreeGrafter"/>
</dbReference>
<dbReference type="GO" id="GO:0004372">
    <property type="term" value="F:glycine hydroxymethyltransferase activity"/>
    <property type="evidence" value="ECO:0007669"/>
    <property type="project" value="UniProtKB-UniRule"/>
</dbReference>
<dbReference type="GO" id="GO:0030170">
    <property type="term" value="F:pyridoxal phosphate binding"/>
    <property type="evidence" value="ECO:0007669"/>
    <property type="project" value="UniProtKB-UniRule"/>
</dbReference>
<dbReference type="GO" id="GO:0019264">
    <property type="term" value="P:glycine biosynthetic process from serine"/>
    <property type="evidence" value="ECO:0007669"/>
    <property type="project" value="UniProtKB-UniRule"/>
</dbReference>
<dbReference type="GO" id="GO:0035999">
    <property type="term" value="P:tetrahydrofolate interconversion"/>
    <property type="evidence" value="ECO:0007669"/>
    <property type="project" value="UniProtKB-UniRule"/>
</dbReference>
<dbReference type="CDD" id="cd00378">
    <property type="entry name" value="SHMT"/>
    <property type="match status" value="1"/>
</dbReference>
<dbReference type="FunFam" id="3.40.640.10:FF:000001">
    <property type="entry name" value="Serine hydroxymethyltransferase"/>
    <property type="match status" value="1"/>
</dbReference>
<dbReference type="Gene3D" id="3.90.1150.10">
    <property type="entry name" value="Aspartate Aminotransferase, domain 1"/>
    <property type="match status" value="1"/>
</dbReference>
<dbReference type="Gene3D" id="3.40.640.10">
    <property type="entry name" value="Type I PLP-dependent aspartate aminotransferase-like (Major domain)"/>
    <property type="match status" value="1"/>
</dbReference>
<dbReference type="HAMAP" id="MF_00051">
    <property type="entry name" value="SHMT"/>
    <property type="match status" value="1"/>
</dbReference>
<dbReference type="InterPro" id="IPR015424">
    <property type="entry name" value="PyrdxlP-dep_Trfase"/>
</dbReference>
<dbReference type="InterPro" id="IPR015421">
    <property type="entry name" value="PyrdxlP-dep_Trfase_major"/>
</dbReference>
<dbReference type="InterPro" id="IPR015422">
    <property type="entry name" value="PyrdxlP-dep_Trfase_small"/>
</dbReference>
<dbReference type="InterPro" id="IPR001085">
    <property type="entry name" value="Ser_HO-MeTrfase"/>
</dbReference>
<dbReference type="InterPro" id="IPR049943">
    <property type="entry name" value="Ser_HO-MeTrfase-like"/>
</dbReference>
<dbReference type="InterPro" id="IPR019798">
    <property type="entry name" value="Ser_HO-MeTrfase_PLP_BS"/>
</dbReference>
<dbReference type="InterPro" id="IPR039429">
    <property type="entry name" value="SHMT-like_dom"/>
</dbReference>
<dbReference type="NCBIfam" id="NF000586">
    <property type="entry name" value="PRK00011.1"/>
    <property type="match status" value="1"/>
</dbReference>
<dbReference type="PANTHER" id="PTHR11680">
    <property type="entry name" value="SERINE HYDROXYMETHYLTRANSFERASE"/>
    <property type="match status" value="1"/>
</dbReference>
<dbReference type="PANTHER" id="PTHR11680:SF35">
    <property type="entry name" value="SERINE HYDROXYMETHYLTRANSFERASE 1"/>
    <property type="match status" value="1"/>
</dbReference>
<dbReference type="Pfam" id="PF00464">
    <property type="entry name" value="SHMT"/>
    <property type="match status" value="1"/>
</dbReference>
<dbReference type="PIRSF" id="PIRSF000412">
    <property type="entry name" value="SHMT"/>
    <property type="match status" value="1"/>
</dbReference>
<dbReference type="SUPFAM" id="SSF53383">
    <property type="entry name" value="PLP-dependent transferases"/>
    <property type="match status" value="1"/>
</dbReference>
<dbReference type="PROSITE" id="PS00096">
    <property type="entry name" value="SHMT"/>
    <property type="match status" value="1"/>
</dbReference>
<name>GLYA_RICRS</name>
<evidence type="ECO:0000255" key="1">
    <source>
        <dbReference type="HAMAP-Rule" id="MF_00051"/>
    </source>
</evidence>
<evidence type="ECO:0007829" key="2">
    <source>
        <dbReference type="PDB" id="4J5U"/>
    </source>
</evidence>
<organism>
    <name type="scientific">Rickettsia rickettsii (strain Sheila Smith)</name>
    <dbReference type="NCBI Taxonomy" id="392021"/>
    <lineage>
        <taxon>Bacteria</taxon>
        <taxon>Pseudomonadati</taxon>
        <taxon>Pseudomonadota</taxon>
        <taxon>Alphaproteobacteria</taxon>
        <taxon>Rickettsiales</taxon>
        <taxon>Rickettsiaceae</taxon>
        <taxon>Rickettsieae</taxon>
        <taxon>Rickettsia</taxon>
        <taxon>spotted fever group</taxon>
    </lineage>
</organism>
<proteinExistence type="evidence at protein level"/>
<gene>
    <name evidence="1" type="primary">glyA</name>
    <name type="ordered locus">A1G_06305</name>
</gene>
<protein>
    <recommendedName>
        <fullName evidence="1">Serine hydroxymethyltransferase</fullName>
        <shortName evidence="1">SHMT</shortName>
        <shortName evidence="1">Serine methylase</shortName>
        <ecNumber evidence="1">2.1.2.1</ecNumber>
    </recommendedName>
</protein>
<keyword id="KW-0002">3D-structure</keyword>
<keyword id="KW-0028">Amino-acid biosynthesis</keyword>
<keyword id="KW-0963">Cytoplasm</keyword>
<keyword id="KW-0554">One-carbon metabolism</keyword>
<keyword id="KW-0663">Pyridoxal phosphate</keyword>
<keyword id="KW-0808">Transferase</keyword>
<accession>A8GTI9</accession>